<keyword id="KW-1003">Cell membrane</keyword>
<keyword id="KW-0472">Membrane</keyword>
<keyword id="KW-0520">NAD</keyword>
<keyword id="KW-0874">Quinone</keyword>
<keyword id="KW-1278">Translocase</keyword>
<keyword id="KW-0813">Transport</keyword>
<protein>
    <recommendedName>
        <fullName evidence="1">NADH-quinone oxidoreductase subunit C</fullName>
        <ecNumber evidence="1">7.1.1.-</ecNumber>
    </recommendedName>
    <alternativeName>
        <fullName evidence="1">NADH dehydrogenase I subunit C</fullName>
    </alternativeName>
    <alternativeName>
        <fullName evidence="1">NDH-1 subunit C</fullName>
    </alternativeName>
</protein>
<feature type="chain" id="PRO_0000358142" description="NADH-quinone oxidoreductase subunit C">
    <location>
        <begin position="1"/>
        <end position="238"/>
    </location>
</feature>
<feature type="region of interest" description="Disordered" evidence="2">
    <location>
        <begin position="1"/>
        <end position="20"/>
    </location>
</feature>
<accession>A0PR40</accession>
<name>NUOC_MYCUA</name>
<proteinExistence type="inferred from homology"/>
<organism>
    <name type="scientific">Mycobacterium ulcerans (strain Agy99)</name>
    <dbReference type="NCBI Taxonomy" id="362242"/>
    <lineage>
        <taxon>Bacteria</taxon>
        <taxon>Bacillati</taxon>
        <taxon>Actinomycetota</taxon>
        <taxon>Actinomycetes</taxon>
        <taxon>Mycobacteriales</taxon>
        <taxon>Mycobacteriaceae</taxon>
        <taxon>Mycobacterium</taxon>
        <taxon>Mycobacterium ulcerans group</taxon>
    </lineage>
</organism>
<evidence type="ECO:0000255" key="1">
    <source>
        <dbReference type="HAMAP-Rule" id="MF_01357"/>
    </source>
</evidence>
<evidence type="ECO:0000256" key="2">
    <source>
        <dbReference type="SAM" id="MobiDB-lite"/>
    </source>
</evidence>
<reference key="1">
    <citation type="journal article" date="2007" name="Genome Res.">
        <title>Reductive evolution and niche adaptation inferred from the genome of Mycobacterium ulcerans, the causative agent of Buruli ulcer.</title>
        <authorList>
            <person name="Stinear T.P."/>
            <person name="Seemann T."/>
            <person name="Pidot S."/>
            <person name="Frigui W."/>
            <person name="Reysset G."/>
            <person name="Garnier T."/>
            <person name="Meurice G."/>
            <person name="Simon D."/>
            <person name="Bouchier C."/>
            <person name="Ma L."/>
            <person name="Tichit M."/>
            <person name="Porter J.L."/>
            <person name="Ryan J."/>
            <person name="Johnson P.D.R."/>
            <person name="Davies J.K."/>
            <person name="Jenkin G.A."/>
            <person name="Small P.L.C."/>
            <person name="Jones L.M."/>
            <person name="Tekaia F."/>
            <person name="Laval F."/>
            <person name="Daffe M."/>
            <person name="Parkhill J."/>
            <person name="Cole S.T."/>
        </authorList>
    </citation>
    <scope>NUCLEOTIDE SEQUENCE [LARGE SCALE GENOMIC DNA]</scope>
    <source>
        <strain>Agy99</strain>
    </source>
</reference>
<gene>
    <name evidence="1" type="primary">nuoC</name>
    <name type="ordered locus">MUL_2461</name>
</gene>
<sequence length="238" mass="26973">MSSPDQNPSDAAGQTGSSNEEVVDVRRGMFGVKGSGDTSGYGRLVREIVLPGSSPRPYGFYFDEIADRLAEALNRDGVEFEDAIEKVVVYRNELTLHVRREALLRVAQSLRDEPELRFELCLGVNGVHYPHETGRELHAVYPLQSITHNRRLRLEVSAPDSDPHIPSLYAVYPTNDWHERETYDFFGIIFDGHPSLTRIEMPDDWQGHPQRKDYPLGGIPVEYKGAQIPPPDERRGYN</sequence>
<comment type="function">
    <text evidence="1">NDH-1 shuttles electrons from NADH, via FMN and iron-sulfur (Fe-S) centers, to quinones in the respiratory chain. The immediate electron acceptor for the enzyme in this species is believed to be a menaquinone. Couples the redox reaction to proton translocation (for every two electrons transferred, four hydrogen ions are translocated across the cytoplasmic membrane), and thus conserves the redox energy in a proton gradient.</text>
</comment>
<comment type="catalytic activity">
    <reaction evidence="1">
        <text>a quinone + NADH + 5 H(+)(in) = a quinol + NAD(+) + 4 H(+)(out)</text>
        <dbReference type="Rhea" id="RHEA:57888"/>
        <dbReference type="ChEBI" id="CHEBI:15378"/>
        <dbReference type="ChEBI" id="CHEBI:24646"/>
        <dbReference type="ChEBI" id="CHEBI:57540"/>
        <dbReference type="ChEBI" id="CHEBI:57945"/>
        <dbReference type="ChEBI" id="CHEBI:132124"/>
    </reaction>
</comment>
<comment type="subunit">
    <text evidence="1">NDH-1 is composed of 14 different subunits. Subunits NuoB, C, D, E, F, and G constitute the peripheral sector of the complex.</text>
</comment>
<comment type="subcellular location">
    <subcellularLocation>
        <location evidence="1">Cell membrane</location>
        <topology evidence="1">Peripheral membrane protein</topology>
        <orientation evidence="1">Cytoplasmic side</orientation>
    </subcellularLocation>
</comment>
<comment type="similarity">
    <text evidence="1">Belongs to the complex I 30 kDa subunit family.</text>
</comment>
<dbReference type="EC" id="7.1.1.-" evidence="1"/>
<dbReference type="EMBL" id="CP000325">
    <property type="protein sequence ID" value="ABL04809.1"/>
    <property type="molecule type" value="Genomic_DNA"/>
</dbReference>
<dbReference type="RefSeq" id="WP_011740424.1">
    <property type="nucleotide sequence ID" value="NC_008611.1"/>
</dbReference>
<dbReference type="SMR" id="A0PR40"/>
<dbReference type="KEGG" id="mul:MUL_2461"/>
<dbReference type="eggNOG" id="COG0852">
    <property type="taxonomic scope" value="Bacteria"/>
</dbReference>
<dbReference type="HOGENOM" id="CLU_042628_4_0_11"/>
<dbReference type="Proteomes" id="UP000000765">
    <property type="component" value="Chromosome"/>
</dbReference>
<dbReference type="GO" id="GO:0005886">
    <property type="term" value="C:plasma membrane"/>
    <property type="evidence" value="ECO:0007669"/>
    <property type="project" value="UniProtKB-SubCell"/>
</dbReference>
<dbReference type="GO" id="GO:0008137">
    <property type="term" value="F:NADH dehydrogenase (ubiquinone) activity"/>
    <property type="evidence" value="ECO:0007669"/>
    <property type="project" value="InterPro"/>
</dbReference>
<dbReference type="GO" id="GO:0050136">
    <property type="term" value="F:NADH:ubiquinone reductase (non-electrogenic) activity"/>
    <property type="evidence" value="ECO:0007669"/>
    <property type="project" value="UniProtKB-UniRule"/>
</dbReference>
<dbReference type="GO" id="GO:0048038">
    <property type="term" value="F:quinone binding"/>
    <property type="evidence" value="ECO:0007669"/>
    <property type="project" value="UniProtKB-KW"/>
</dbReference>
<dbReference type="FunFam" id="3.30.460.80:FF:000006">
    <property type="entry name" value="NADH-quinone oxidoreductase subunit C"/>
    <property type="match status" value="1"/>
</dbReference>
<dbReference type="Gene3D" id="3.30.460.80">
    <property type="entry name" value="NADH:ubiquinone oxidoreductase, 30kDa subunit"/>
    <property type="match status" value="1"/>
</dbReference>
<dbReference type="HAMAP" id="MF_01357">
    <property type="entry name" value="NDH1_NuoC"/>
    <property type="match status" value="1"/>
</dbReference>
<dbReference type="InterPro" id="IPR010218">
    <property type="entry name" value="NADH_DH_suC"/>
</dbReference>
<dbReference type="InterPro" id="IPR037232">
    <property type="entry name" value="NADH_quin_OxRdtase_su_C/D-like"/>
</dbReference>
<dbReference type="InterPro" id="IPR001268">
    <property type="entry name" value="NADH_UbQ_OxRdtase_30kDa_su"/>
</dbReference>
<dbReference type="NCBIfam" id="TIGR01961">
    <property type="entry name" value="NuoC_fam"/>
    <property type="match status" value="1"/>
</dbReference>
<dbReference type="NCBIfam" id="NF005856">
    <property type="entry name" value="PRK07785.1"/>
    <property type="match status" value="1"/>
</dbReference>
<dbReference type="PANTHER" id="PTHR10884:SF14">
    <property type="entry name" value="NADH DEHYDROGENASE [UBIQUINONE] IRON-SULFUR PROTEIN 3, MITOCHONDRIAL"/>
    <property type="match status" value="1"/>
</dbReference>
<dbReference type="PANTHER" id="PTHR10884">
    <property type="entry name" value="NADH DEHYDROGENASE UBIQUINONE IRON-SULFUR PROTEIN 3"/>
    <property type="match status" value="1"/>
</dbReference>
<dbReference type="Pfam" id="PF00329">
    <property type="entry name" value="Complex1_30kDa"/>
    <property type="match status" value="1"/>
</dbReference>
<dbReference type="SUPFAM" id="SSF143243">
    <property type="entry name" value="Nqo5-like"/>
    <property type="match status" value="1"/>
</dbReference>